<proteinExistence type="inferred from homology"/>
<comment type="function">
    <text evidence="1">Catalyzes the base-exchange of a guanine (G) residue with the queuine precursor 7-aminomethyl-7-deazaguanine (PreQ1) at position 34 (anticodon wobble position) in tRNAs with GU(N) anticodons (tRNA-Asp, -Asn, -His and -Tyr). Catalysis occurs through a double-displacement mechanism. The nucleophile active site attacks the C1' of nucleotide 34 to detach the guanine base from the RNA, forming a covalent enzyme-RNA intermediate. The proton acceptor active site deprotonates the incoming PreQ1, allowing a nucleophilic attack on the C1' of the ribose to form the product. After dissociation, two additional enzymatic reactions on the tRNA convert PreQ1 to queuine (Q), resulting in the hypermodified nucleoside queuosine (7-(((4,5-cis-dihydroxy-2-cyclopenten-1-yl)amino)methyl)-7-deazaguanosine).</text>
</comment>
<comment type="catalytic activity">
    <reaction evidence="1">
        <text>7-aminomethyl-7-carbaguanine + guanosine(34) in tRNA = 7-aminomethyl-7-carbaguanosine(34) in tRNA + guanine</text>
        <dbReference type="Rhea" id="RHEA:24104"/>
        <dbReference type="Rhea" id="RHEA-COMP:10341"/>
        <dbReference type="Rhea" id="RHEA-COMP:10342"/>
        <dbReference type="ChEBI" id="CHEBI:16235"/>
        <dbReference type="ChEBI" id="CHEBI:58703"/>
        <dbReference type="ChEBI" id="CHEBI:74269"/>
        <dbReference type="ChEBI" id="CHEBI:82833"/>
        <dbReference type="EC" id="2.4.2.29"/>
    </reaction>
</comment>
<comment type="cofactor">
    <cofactor evidence="1">
        <name>Zn(2+)</name>
        <dbReference type="ChEBI" id="CHEBI:29105"/>
    </cofactor>
    <text evidence="1">Binds 1 zinc ion per subunit.</text>
</comment>
<comment type="pathway">
    <text evidence="1">tRNA modification; tRNA-queuosine biosynthesis.</text>
</comment>
<comment type="subunit">
    <text evidence="1">Homodimer. Within each dimer, one monomer is responsible for RNA recognition and catalysis, while the other monomer binds to the replacement base PreQ1.</text>
</comment>
<comment type="similarity">
    <text evidence="1">Belongs to the queuine tRNA-ribosyltransferase family.</text>
</comment>
<gene>
    <name evidence="1" type="primary">tgt</name>
    <name type="ordered locus">Xfasm12_0191</name>
</gene>
<sequence>MSRLQFQLQATDGAARRGQLSFPCGTVQTPAFMPVGTYGAVKAVLPGQLCDLGAEIILGNTFHLFLRPGLEVIADHGGLHGFMRWNGPILTDSGGFQVFSLAHRRKISEQGVTFAAPTDGAQVFLGPEESMKIQKVLNSDVVMIFDECTPYPATEDVARDSMELSLRWAQRSRDAHDALDNDAALFGIIQGGVHPDLRGRSLDGLQAIGFDGYAIGGLAVGESESERNVILEYLHPRLPVDRPRYLMGVGRPEDLVESVARGVDMFDCVMPTRHARNGQYFTGFGTVKIRNACYARDVDPIEPGCGCPACVGGYTRAYLRHLDRCNEMLASMLGSLHNLWYYETLMANMRAAITAGTFFTFRHSFYLARGLDPPPLPEVASCAG</sequence>
<feature type="chain" id="PRO_1000097580" description="Queuine tRNA-ribosyltransferase">
    <location>
        <begin position="1"/>
        <end position="384"/>
    </location>
</feature>
<feature type="region of interest" description="RNA binding" evidence="1">
    <location>
        <begin position="248"/>
        <end position="254"/>
    </location>
</feature>
<feature type="region of interest" description="RNA binding; important for wobble base 34 recognition" evidence="1">
    <location>
        <begin position="272"/>
        <end position="276"/>
    </location>
</feature>
<feature type="active site" description="Proton acceptor" evidence="1">
    <location>
        <position position="92"/>
    </location>
</feature>
<feature type="active site" description="Nucleophile" evidence="1">
    <location>
        <position position="267"/>
    </location>
</feature>
<feature type="binding site" evidence="1">
    <location>
        <begin position="92"/>
        <end position="96"/>
    </location>
    <ligand>
        <name>substrate</name>
    </ligand>
</feature>
<feature type="binding site" evidence="1">
    <location>
        <position position="146"/>
    </location>
    <ligand>
        <name>substrate</name>
    </ligand>
</feature>
<feature type="binding site" evidence="1">
    <location>
        <position position="190"/>
    </location>
    <ligand>
        <name>substrate</name>
    </ligand>
</feature>
<feature type="binding site" evidence="1">
    <location>
        <position position="217"/>
    </location>
    <ligand>
        <name>substrate</name>
    </ligand>
</feature>
<feature type="binding site" evidence="1">
    <location>
        <position position="305"/>
    </location>
    <ligand>
        <name>Zn(2+)</name>
        <dbReference type="ChEBI" id="CHEBI:29105"/>
    </ligand>
</feature>
<feature type="binding site" evidence="1">
    <location>
        <position position="307"/>
    </location>
    <ligand>
        <name>Zn(2+)</name>
        <dbReference type="ChEBI" id="CHEBI:29105"/>
    </ligand>
</feature>
<feature type="binding site" evidence="1">
    <location>
        <position position="310"/>
    </location>
    <ligand>
        <name>Zn(2+)</name>
        <dbReference type="ChEBI" id="CHEBI:29105"/>
    </ligand>
</feature>
<feature type="binding site" evidence="1">
    <location>
        <position position="337"/>
    </location>
    <ligand>
        <name>Zn(2+)</name>
        <dbReference type="ChEBI" id="CHEBI:29105"/>
    </ligand>
</feature>
<dbReference type="EC" id="2.4.2.29" evidence="1"/>
<dbReference type="EMBL" id="CP000941">
    <property type="protein sequence ID" value="ACA11224.1"/>
    <property type="molecule type" value="Genomic_DNA"/>
</dbReference>
<dbReference type="RefSeq" id="WP_004086289.1">
    <property type="nucleotide sequence ID" value="NC_010513.1"/>
</dbReference>
<dbReference type="SMR" id="B0U1P6"/>
<dbReference type="KEGG" id="xfm:Xfasm12_0191"/>
<dbReference type="HOGENOM" id="CLU_022060_0_1_6"/>
<dbReference type="UniPathway" id="UPA00392"/>
<dbReference type="GO" id="GO:0005829">
    <property type="term" value="C:cytosol"/>
    <property type="evidence" value="ECO:0007669"/>
    <property type="project" value="TreeGrafter"/>
</dbReference>
<dbReference type="GO" id="GO:0046872">
    <property type="term" value="F:metal ion binding"/>
    <property type="evidence" value="ECO:0007669"/>
    <property type="project" value="UniProtKB-KW"/>
</dbReference>
<dbReference type="GO" id="GO:0008479">
    <property type="term" value="F:tRNA-guanosine(34) queuine transglycosylase activity"/>
    <property type="evidence" value="ECO:0007669"/>
    <property type="project" value="UniProtKB-UniRule"/>
</dbReference>
<dbReference type="GO" id="GO:0008616">
    <property type="term" value="P:queuosine biosynthetic process"/>
    <property type="evidence" value="ECO:0007669"/>
    <property type="project" value="UniProtKB-UniRule"/>
</dbReference>
<dbReference type="GO" id="GO:0002099">
    <property type="term" value="P:tRNA wobble guanine modification"/>
    <property type="evidence" value="ECO:0007669"/>
    <property type="project" value="TreeGrafter"/>
</dbReference>
<dbReference type="GO" id="GO:0101030">
    <property type="term" value="P:tRNA-guanine transglycosylation"/>
    <property type="evidence" value="ECO:0007669"/>
    <property type="project" value="InterPro"/>
</dbReference>
<dbReference type="FunFam" id="3.20.20.105:FF:000001">
    <property type="entry name" value="Queuine tRNA-ribosyltransferase"/>
    <property type="match status" value="1"/>
</dbReference>
<dbReference type="Gene3D" id="3.20.20.105">
    <property type="entry name" value="Queuine tRNA-ribosyltransferase-like"/>
    <property type="match status" value="1"/>
</dbReference>
<dbReference type="HAMAP" id="MF_00168">
    <property type="entry name" value="Q_tRNA_Tgt"/>
    <property type="match status" value="1"/>
</dbReference>
<dbReference type="InterPro" id="IPR050076">
    <property type="entry name" value="ArchSynthase1/Queuine_TRR"/>
</dbReference>
<dbReference type="InterPro" id="IPR004803">
    <property type="entry name" value="TGT"/>
</dbReference>
<dbReference type="InterPro" id="IPR036511">
    <property type="entry name" value="TGT-like_sf"/>
</dbReference>
<dbReference type="InterPro" id="IPR002616">
    <property type="entry name" value="tRNA_ribo_trans-like"/>
</dbReference>
<dbReference type="NCBIfam" id="TIGR00430">
    <property type="entry name" value="Q_tRNA_tgt"/>
    <property type="match status" value="1"/>
</dbReference>
<dbReference type="NCBIfam" id="TIGR00449">
    <property type="entry name" value="tgt_general"/>
    <property type="match status" value="1"/>
</dbReference>
<dbReference type="PANTHER" id="PTHR46499">
    <property type="entry name" value="QUEUINE TRNA-RIBOSYLTRANSFERASE"/>
    <property type="match status" value="1"/>
</dbReference>
<dbReference type="PANTHER" id="PTHR46499:SF1">
    <property type="entry name" value="QUEUINE TRNA-RIBOSYLTRANSFERASE"/>
    <property type="match status" value="1"/>
</dbReference>
<dbReference type="Pfam" id="PF01702">
    <property type="entry name" value="TGT"/>
    <property type="match status" value="1"/>
</dbReference>
<dbReference type="SUPFAM" id="SSF51713">
    <property type="entry name" value="tRNA-guanine transglycosylase"/>
    <property type="match status" value="1"/>
</dbReference>
<accession>B0U1P6</accession>
<keyword id="KW-0328">Glycosyltransferase</keyword>
<keyword id="KW-0479">Metal-binding</keyword>
<keyword id="KW-0671">Queuosine biosynthesis</keyword>
<keyword id="KW-0808">Transferase</keyword>
<keyword id="KW-0819">tRNA processing</keyword>
<keyword id="KW-0862">Zinc</keyword>
<evidence type="ECO:0000255" key="1">
    <source>
        <dbReference type="HAMAP-Rule" id="MF_00168"/>
    </source>
</evidence>
<reference key="1">
    <citation type="journal article" date="2010" name="J. Bacteriol.">
        <title>Whole genome sequences of two Xylella fastidiosa strains (M12 and M23) causing almond leaf scorch disease in California.</title>
        <authorList>
            <person name="Chen J."/>
            <person name="Xie G."/>
            <person name="Han S."/>
            <person name="Chertkov O."/>
            <person name="Sims D."/>
            <person name="Civerolo E.L."/>
        </authorList>
    </citation>
    <scope>NUCLEOTIDE SEQUENCE [LARGE SCALE GENOMIC DNA]</scope>
    <source>
        <strain>M12</strain>
    </source>
</reference>
<name>TGT_XYLFM</name>
<organism>
    <name type="scientific">Xylella fastidiosa (strain M12)</name>
    <dbReference type="NCBI Taxonomy" id="405440"/>
    <lineage>
        <taxon>Bacteria</taxon>
        <taxon>Pseudomonadati</taxon>
        <taxon>Pseudomonadota</taxon>
        <taxon>Gammaproteobacteria</taxon>
        <taxon>Lysobacterales</taxon>
        <taxon>Lysobacteraceae</taxon>
        <taxon>Xylella</taxon>
    </lineage>
</organism>
<protein>
    <recommendedName>
        <fullName evidence="1">Queuine tRNA-ribosyltransferase</fullName>
        <ecNumber evidence="1">2.4.2.29</ecNumber>
    </recommendedName>
    <alternativeName>
        <fullName evidence="1">Guanine insertion enzyme</fullName>
    </alternativeName>
    <alternativeName>
        <fullName evidence="1">tRNA-guanine transglycosylase</fullName>
    </alternativeName>
</protein>